<proteinExistence type="inferred from homology"/>
<evidence type="ECO:0000255" key="1">
    <source>
        <dbReference type="HAMAP-Rule" id="MF_01390"/>
    </source>
</evidence>
<organism>
    <name type="scientific">Actinidia deliciosa</name>
    <name type="common">Kiwi</name>
    <dbReference type="NCBI Taxonomy" id="3627"/>
    <lineage>
        <taxon>Eukaryota</taxon>
        <taxon>Viridiplantae</taxon>
        <taxon>Streptophyta</taxon>
        <taxon>Embryophyta</taxon>
        <taxon>Tracheophyta</taxon>
        <taxon>Spermatophyta</taxon>
        <taxon>Magnoliopsida</taxon>
        <taxon>eudicotyledons</taxon>
        <taxon>Gunneridae</taxon>
        <taxon>Pentapetalae</taxon>
        <taxon>asterids</taxon>
        <taxon>Ericales</taxon>
        <taxon>Actinidiaceae</taxon>
        <taxon>Actinidia</taxon>
    </lineage>
</organism>
<dbReference type="EMBL" id="AF322619">
    <property type="protein sequence ID" value="AAK97339.1"/>
    <property type="molecule type" value="Genomic_DNA"/>
</dbReference>
<dbReference type="GO" id="GO:0009507">
    <property type="term" value="C:chloroplast"/>
    <property type="evidence" value="ECO:0007669"/>
    <property type="project" value="UniProtKB-SubCell"/>
</dbReference>
<dbReference type="GO" id="GO:0003723">
    <property type="term" value="F:RNA binding"/>
    <property type="evidence" value="ECO:0007669"/>
    <property type="project" value="UniProtKB-KW"/>
</dbReference>
<dbReference type="GO" id="GO:0006397">
    <property type="term" value="P:mRNA processing"/>
    <property type="evidence" value="ECO:0007669"/>
    <property type="project" value="UniProtKB-KW"/>
</dbReference>
<dbReference type="GO" id="GO:0008380">
    <property type="term" value="P:RNA splicing"/>
    <property type="evidence" value="ECO:0007669"/>
    <property type="project" value="UniProtKB-UniRule"/>
</dbReference>
<dbReference type="GO" id="GO:0008033">
    <property type="term" value="P:tRNA processing"/>
    <property type="evidence" value="ECO:0007669"/>
    <property type="project" value="UniProtKB-KW"/>
</dbReference>
<dbReference type="HAMAP" id="MF_01390">
    <property type="entry name" value="MatK"/>
    <property type="match status" value="1"/>
</dbReference>
<dbReference type="InterPro" id="IPR024937">
    <property type="entry name" value="Domain_X"/>
</dbReference>
<dbReference type="InterPro" id="IPR002866">
    <property type="entry name" value="Maturase_MatK"/>
</dbReference>
<dbReference type="InterPro" id="IPR024942">
    <property type="entry name" value="Maturase_MatK_N"/>
</dbReference>
<dbReference type="PANTHER" id="PTHR34811">
    <property type="entry name" value="MATURASE K"/>
    <property type="match status" value="1"/>
</dbReference>
<dbReference type="PANTHER" id="PTHR34811:SF1">
    <property type="entry name" value="MATURASE K"/>
    <property type="match status" value="1"/>
</dbReference>
<dbReference type="Pfam" id="PF01348">
    <property type="entry name" value="Intron_maturas2"/>
    <property type="match status" value="1"/>
</dbReference>
<dbReference type="Pfam" id="PF01824">
    <property type="entry name" value="MatK_N"/>
    <property type="match status" value="1"/>
</dbReference>
<reference key="1">
    <citation type="submission" date="2000-11" db="EMBL/GenBank/DDBJ databases">
        <title>Molecular phylogeny of Actinidia (Actinidiaceae) and implications for intrageneric classification.</title>
        <authorList>
            <person name="Li J."/>
            <person name="Huang H."/>
            <person name="Sang T."/>
        </authorList>
    </citation>
    <scope>NUCLEOTIDE SEQUENCE [GENOMIC DNA]</scope>
</reference>
<name>MATK_ACTDE</name>
<keyword id="KW-0150">Chloroplast</keyword>
<keyword id="KW-0507">mRNA processing</keyword>
<keyword id="KW-0934">Plastid</keyword>
<keyword id="KW-0694">RNA-binding</keyword>
<keyword id="KW-0819">tRNA processing</keyword>
<comment type="function">
    <text evidence="1">Usually encoded in the trnK tRNA gene intron. Probably assists in splicing its own and other chloroplast group II introns.</text>
</comment>
<comment type="subcellular location">
    <subcellularLocation>
        <location>Plastid</location>
        <location>Chloroplast</location>
    </subcellularLocation>
</comment>
<comment type="similarity">
    <text evidence="1">Belongs to the intron maturase 2 family. MatK subfamily.</text>
</comment>
<geneLocation type="chloroplast"/>
<protein>
    <recommendedName>
        <fullName evidence="1">Maturase K</fullName>
    </recommendedName>
    <alternativeName>
        <fullName evidence="1">Intron maturase</fullName>
    </alternativeName>
</protein>
<feature type="chain" id="PRO_0000143208" description="Maturase K">
    <location>
        <begin position="1"/>
        <end position="504"/>
    </location>
</feature>
<gene>
    <name evidence="1" type="primary">matK</name>
</gene>
<sequence length="504" mass="59865">MKEFKRYLELDRSQQHDFVYPLLFQEYIYVLAHDHGLNRSILLENADYDNKFSLLIVKRLITQMDQQNHLIFSPNDSNQNPFLGHNTNLYSQMILEGFAVVVEIPFSLRLISSLEGKETVKSHKLRSIHSIFPFLEDKFSRLNYVLDILIPHSIHLEILVQTLRYWVKDASSLHLLRFFLHEYRNWNTRITPKESSFSFSKRNQRFFLFLYNFHVCESESIFVFLRNQSSHLRSISSGTFLERIYFYGKIEHFVKVFTKDFQDILWLFKDPFMHYVRYQGNSILASKGTSLLMNKWKYYLVNFWQCYFYMWCQPGRIQINQLSNHSLDFLGYLSSVRLNPSMVRSQMLENSFLIGNAIKKFDTIVPIIPLIGSLYKAKFCNVLGHPVSKPVWADLSDSDIIDRFGRIYRNLSHYHTGSLKKTSLYRIKYILRLSCARTLARKHRSTVRAFLKRLGSELLEEFFTEEEQVFDLTFQETYSTSQGLSRGRIWYLDIICINDLANHE</sequence>
<accession>Q95BZ7</accession>